<evidence type="ECO:0000255" key="1">
    <source>
        <dbReference type="HAMAP-Rule" id="MF_01160"/>
    </source>
</evidence>
<name>CUTA_SALA4</name>
<sequence>MLDVKSQDISIPEAVVVLCTAPDEATAQDLAAKVLAEKLAACATLLPGATSLYYWEGKLEQEYEVQMILKTTVSHQQALIDCLKSHHPYQTPELLVLPVTHGDTDYLSWLNASLR</sequence>
<gene>
    <name evidence="1" type="primary">cutA</name>
    <name type="ordered locus">SeAg_B4602</name>
</gene>
<reference key="1">
    <citation type="journal article" date="2011" name="J. Bacteriol.">
        <title>Comparative genomics of 28 Salmonella enterica isolates: evidence for CRISPR-mediated adaptive sublineage evolution.</title>
        <authorList>
            <person name="Fricke W.F."/>
            <person name="Mammel M.K."/>
            <person name="McDermott P.F."/>
            <person name="Tartera C."/>
            <person name="White D.G."/>
            <person name="Leclerc J.E."/>
            <person name="Ravel J."/>
            <person name="Cebula T.A."/>
        </authorList>
    </citation>
    <scope>NUCLEOTIDE SEQUENCE [LARGE SCALE GENOMIC DNA]</scope>
    <source>
        <strain>SL483</strain>
    </source>
</reference>
<feature type="chain" id="PRO_1000137847" description="Divalent-cation tolerance protein CutA">
    <location>
        <begin position="1"/>
        <end position="115"/>
    </location>
</feature>
<feature type="binding site" evidence="1">
    <location>
        <position position="19"/>
    </location>
    <ligand>
        <name>Cu cation</name>
        <dbReference type="ChEBI" id="CHEBI:23378"/>
    </ligand>
</feature>
<feature type="binding site" evidence="1">
    <location>
        <position position="86"/>
    </location>
    <ligand>
        <name>Cu cation</name>
        <dbReference type="ChEBI" id="CHEBI:23378"/>
    </ligand>
</feature>
<feature type="binding site" evidence="1">
    <location>
        <position position="87"/>
    </location>
    <ligand>
        <name>Cu cation</name>
        <dbReference type="ChEBI" id="CHEBI:23378"/>
    </ligand>
</feature>
<accession>B5F2K4</accession>
<proteinExistence type="inferred from homology"/>
<comment type="function">
    <text evidence="1">Involved in resistance toward heavy metals.</text>
</comment>
<comment type="cofactor">
    <cofactor evidence="1">
        <name>Cu cation</name>
        <dbReference type="ChEBI" id="CHEBI:23378"/>
    </cofactor>
    <text evidence="1">Binds 1 copper ion per subunit.</text>
</comment>
<comment type="subunit">
    <text evidence="1">Homotrimer.</text>
</comment>
<comment type="subcellular location">
    <subcellularLocation>
        <location evidence="1">Cytoplasm</location>
    </subcellularLocation>
</comment>
<comment type="similarity">
    <text evidence="1">Belongs to the CutA family.</text>
</comment>
<keyword id="KW-0186">Copper</keyword>
<keyword id="KW-0963">Cytoplasm</keyword>
<keyword id="KW-0479">Metal-binding</keyword>
<dbReference type="EMBL" id="CP001138">
    <property type="protein sequence ID" value="ACH48938.1"/>
    <property type="molecule type" value="Genomic_DNA"/>
</dbReference>
<dbReference type="RefSeq" id="WP_000887832.1">
    <property type="nucleotide sequence ID" value="NC_011149.1"/>
</dbReference>
<dbReference type="SMR" id="B5F2K4"/>
<dbReference type="GeneID" id="66758552"/>
<dbReference type="KEGG" id="sea:SeAg_B4602"/>
<dbReference type="HOGENOM" id="CLU_098807_3_0_6"/>
<dbReference type="Proteomes" id="UP000008819">
    <property type="component" value="Chromosome"/>
</dbReference>
<dbReference type="GO" id="GO:0005737">
    <property type="term" value="C:cytoplasm"/>
    <property type="evidence" value="ECO:0007669"/>
    <property type="project" value="UniProtKB-SubCell"/>
</dbReference>
<dbReference type="GO" id="GO:0005507">
    <property type="term" value="F:copper ion binding"/>
    <property type="evidence" value="ECO:0007669"/>
    <property type="project" value="UniProtKB-UniRule"/>
</dbReference>
<dbReference type="GO" id="GO:0010038">
    <property type="term" value="P:response to metal ion"/>
    <property type="evidence" value="ECO:0007669"/>
    <property type="project" value="InterPro"/>
</dbReference>
<dbReference type="FunFam" id="3.30.70.120:FF:000004">
    <property type="entry name" value="Divalent-cation tolerance protein CutA"/>
    <property type="match status" value="1"/>
</dbReference>
<dbReference type="Gene3D" id="3.30.70.120">
    <property type="match status" value="1"/>
</dbReference>
<dbReference type="HAMAP" id="MF_01160">
    <property type="entry name" value="CutA"/>
    <property type="match status" value="1"/>
</dbReference>
<dbReference type="InterPro" id="IPR023700">
    <property type="entry name" value="CutA_Enterobact"/>
</dbReference>
<dbReference type="InterPro" id="IPR004323">
    <property type="entry name" value="Ion_tolerance_CutA"/>
</dbReference>
<dbReference type="InterPro" id="IPR011322">
    <property type="entry name" value="N-reg_PII-like_a/b"/>
</dbReference>
<dbReference type="InterPro" id="IPR015867">
    <property type="entry name" value="N-reg_PII/ATP_PRibTrfase_C"/>
</dbReference>
<dbReference type="NCBIfam" id="NF007930">
    <property type="entry name" value="PRK10645.1"/>
    <property type="match status" value="1"/>
</dbReference>
<dbReference type="PANTHER" id="PTHR23419">
    <property type="entry name" value="DIVALENT CATION TOLERANCE CUTA-RELATED"/>
    <property type="match status" value="1"/>
</dbReference>
<dbReference type="PANTHER" id="PTHR23419:SF8">
    <property type="entry name" value="FI09726P"/>
    <property type="match status" value="1"/>
</dbReference>
<dbReference type="Pfam" id="PF03091">
    <property type="entry name" value="CutA1"/>
    <property type="match status" value="1"/>
</dbReference>
<dbReference type="SUPFAM" id="SSF54913">
    <property type="entry name" value="GlnB-like"/>
    <property type="match status" value="1"/>
</dbReference>
<protein>
    <recommendedName>
        <fullName evidence="1">Divalent-cation tolerance protein CutA</fullName>
    </recommendedName>
</protein>
<organism>
    <name type="scientific">Salmonella agona (strain SL483)</name>
    <dbReference type="NCBI Taxonomy" id="454166"/>
    <lineage>
        <taxon>Bacteria</taxon>
        <taxon>Pseudomonadati</taxon>
        <taxon>Pseudomonadota</taxon>
        <taxon>Gammaproteobacteria</taxon>
        <taxon>Enterobacterales</taxon>
        <taxon>Enterobacteriaceae</taxon>
        <taxon>Salmonella</taxon>
    </lineage>
</organism>